<evidence type="ECO:0000255" key="1">
    <source>
        <dbReference type="HAMAP-Rule" id="MF_00028"/>
    </source>
</evidence>
<dbReference type="EMBL" id="CP000438">
    <property type="protein sequence ID" value="ABJ10465.1"/>
    <property type="molecule type" value="Genomic_DNA"/>
</dbReference>
<dbReference type="RefSeq" id="WP_003112202.1">
    <property type="nucleotide sequence ID" value="NZ_CP034244.1"/>
</dbReference>
<dbReference type="SMR" id="Q02JB8"/>
<dbReference type="KEGG" id="pau:PA14_47690"/>
<dbReference type="PseudoCAP" id="PA14_47690"/>
<dbReference type="HOGENOM" id="CLU_019250_2_2_6"/>
<dbReference type="BioCyc" id="PAER208963:G1G74-4007-MONOMER"/>
<dbReference type="UniPathway" id="UPA00148"/>
<dbReference type="Proteomes" id="UP000000653">
    <property type="component" value="Chromosome"/>
</dbReference>
<dbReference type="GO" id="GO:0015420">
    <property type="term" value="F:ABC-type vitamin B12 transporter activity"/>
    <property type="evidence" value="ECO:0007669"/>
    <property type="project" value="UniProtKB-UniRule"/>
</dbReference>
<dbReference type="GO" id="GO:0003824">
    <property type="term" value="F:catalytic activity"/>
    <property type="evidence" value="ECO:0007669"/>
    <property type="project" value="InterPro"/>
</dbReference>
<dbReference type="GO" id="GO:0009236">
    <property type="term" value="P:cobalamin biosynthetic process"/>
    <property type="evidence" value="ECO:0007669"/>
    <property type="project" value="UniProtKB-UniRule"/>
</dbReference>
<dbReference type="CDD" id="cd05389">
    <property type="entry name" value="CobQ_N"/>
    <property type="match status" value="1"/>
</dbReference>
<dbReference type="CDD" id="cd01750">
    <property type="entry name" value="GATase1_CobQ"/>
    <property type="match status" value="1"/>
</dbReference>
<dbReference type="Gene3D" id="3.40.50.880">
    <property type="match status" value="1"/>
</dbReference>
<dbReference type="Gene3D" id="3.40.50.300">
    <property type="entry name" value="P-loop containing nucleotide triphosphate hydrolases"/>
    <property type="match status" value="1"/>
</dbReference>
<dbReference type="HAMAP" id="MF_00028">
    <property type="entry name" value="CobQ"/>
    <property type="match status" value="1"/>
</dbReference>
<dbReference type="InterPro" id="IPR029062">
    <property type="entry name" value="Class_I_gatase-like"/>
</dbReference>
<dbReference type="InterPro" id="IPR002586">
    <property type="entry name" value="CobQ/CobB/MinD/ParA_Nub-bd_dom"/>
</dbReference>
<dbReference type="InterPro" id="IPR033949">
    <property type="entry name" value="CobQ_GATase1"/>
</dbReference>
<dbReference type="InterPro" id="IPR047045">
    <property type="entry name" value="CobQ_N"/>
</dbReference>
<dbReference type="InterPro" id="IPR004459">
    <property type="entry name" value="CobQ_synth"/>
</dbReference>
<dbReference type="InterPro" id="IPR011698">
    <property type="entry name" value="GATase_3"/>
</dbReference>
<dbReference type="InterPro" id="IPR027417">
    <property type="entry name" value="P-loop_NTPase"/>
</dbReference>
<dbReference type="NCBIfam" id="TIGR00313">
    <property type="entry name" value="cobQ"/>
    <property type="match status" value="1"/>
</dbReference>
<dbReference type="NCBIfam" id="NF001989">
    <property type="entry name" value="PRK00784.1"/>
    <property type="match status" value="1"/>
</dbReference>
<dbReference type="PANTHER" id="PTHR21343:SF1">
    <property type="entry name" value="COBYRIC ACID SYNTHASE"/>
    <property type="match status" value="1"/>
</dbReference>
<dbReference type="PANTHER" id="PTHR21343">
    <property type="entry name" value="DETHIOBIOTIN SYNTHETASE"/>
    <property type="match status" value="1"/>
</dbReference>
<dbReference type="Pfam" id="PF01656">
    <property type="entry name" value="CbiA"/>
    <property type="match status" value="1"/>
</dbReference>
<dbReference type="Pfam" id="PF07685">
    <property type="entry name" value="GATase_3"/>
    <property type="match status" value="1"/>
</dbReference>
<dbReference type="SUPFAM" id="SSF52317">
    <property type="entry name" value="Class I glutamine amidotransferase-like"/>
    <property type="match status" value="1"/>
</dbReference>
<dbReference type="SUPFAM" id="SSF52540">
    <property type="entry name" value="P-loop containing nucleoside triphosphate hydrolases"/>
    <property type="match status" value="1"/>
</dbReference>
<dbReference type="PROSITE" id="PS51274">
    <property type="entry name" value="GATASE_COBBQ"/>
    <property type="match status" value="1"/>
</dbReference>
<sequence>MSDRGRTLMVQGTTSDAGKSTLVTALCRWLARRGVAVVPFKPQNMALNSAVTADGGEIGRAQAVQAQACRLAPHTDMNPVLLKPNTDIGAQVIIHGRAVTSMDAAAYHDYKRVAMEAVLASHGRLAAAYRVVMVEGAGSPAEINLRANDIANMGFAEAVDCPVILVADIDRGGVFAHLVGTLELLSDSERERVKGFVINRFRGDIALLQPGLDWLEARTGKPVLGVLPYVSDLHLEAEDAIDTRQAAKVGPRLKVVVPVLPRISNHTDFDPLRLHPQVELSFVGPGQALPSADLIVLPGSKSVRADLAALRERGWDEAILRHLRYGGRLLGICGGLQMLGERLHDPLGLEGAAGSSAGLGLLALETTLEADKQLRNVQGRLSLEDAPLSGYEIHAGVTRGEALARPAVVLDDGRADGARSVDGNVMGTYLHGLFESTAACSALLRWAGLREVQAVDYQALRERDIERLADLVERNLDTGRLLALCGEPHA</sequence>
<comment type="function">
    <text evidence="1">Catalyzes amidations at positions B, D, E, and G on adenosylcobyrinic A,C-diamide. NH(2) groups are provided by glutamine, and one molecule of ATP is hydrogenolyzed for each amidation.</text>
</comment>
<comment type="pathway">
    <text evidence="1">Cofactor biosynthesis; adenosylcobalamin biosynthesis.</text>
</comment>
<comment type="similarity">
    <text evidence="1">Belongs to the CobB/CobQ family. CobQ subfamily.</text>
</comment>
<name>COBQ_PSEAB</name>
<organism>
    <name type="scientific">Pseudomonas aeruginosa (strain UCBPP-PA14)</name>
    <dbReference type="NCBI Taxonomy" id="208963"/>
    <lineage>
        <taxon>Bacteria</taxon>
        <taxon>Pseudomonadati</taxon>
        <taxon>Pseudomonadota</taxon>
        <taxon>Gammaproteobacteria</taxon>
        <taxon>Pseudomonadales</taxon>
        <taxon>Pseudomonadaceae</taxon>
        <taxon>Pseudomonas</taxon>
    </lineage>
</organism>
<gene>
    <name evidence="1" type="primary">cobQ</name>
    <name type="ordered locus">PA14_47690</name>
</gene>
<keyword id="KW-0169">Cobalamin biosynthesis</keyword>
<keyword id="KW-0315">Glutamine amidotransferase</keyword>
<reference key="1">
    <citation type="journal article" date="2006" name="Genome Biol.">
        <title>Genomic analysis reveals that Pseudomonas aeruginosa virulence is combinatorial.</title>
        <authorList>
            <person name="Lee D.G."/>
            <person name="Urbach J.M."/>
            <person name="Wu G."/>
            <person name="Liberati N.T."/>
            <person name="Feinbaum R.L."/>
            <person name="Miyata S."/>
            <person name="Diggins L.T."/>
            <person name="He J."/>
            <person name="Saucier M."/>
            <person name="Deziel E."/>
            <person name="Friedman L."/>
            <person name="Li L."/>
            <person name="Grills G."/>
            <person name="Montgomery K."/>
            <person name="Kucherlapati R."/>
            <person name="Rahme L.G."/>
            <person name="Ausubel F.M."/>
        </authorList>
    </citation>
    <scope>NUCLEOTIDE SEQUENCE [LARGE SCALE GENOMIC DNA]</scope>
    <source>
        <strain>UCBPP-PA14</strain>
    </source>
</reference>
<feature type="chain" id="PRO_0000332368" description="Cobyric acid synthase">
    <location>
        <begin position="1"/>
        <end position="490"/>
    </location>
</feature>
<feature type="domain" description="GATase cobBQ-type" evidence="1">
    <location>
        <begin position="252"/>
        <end position="439"/>
    </location>
</feature>
<feature type="active site" description="Nucleophile" evidence="1">
    <location>
        <position position="333"/>
    </location>
</feature>
<feature type="active site" evidence="1">
    <location>
        <position position="431"/>
    </location>
</feature>
<protein>
    <recommendedName>
        <fullName evidence="1">Cobyric acid synthase</fullName>
    </recommendedName>
</protein>
<accession>Q02JB8</accession>
<proteinExistence type="inferred from homology"/>